<reference key="1">
    <citation type="journal article" date="1993" name="Mol. Microbiol.">
        <title>Bacillus subtilis genome project: cloning and sequencing of the 97 kb region from 325 degrees to 333 degrees.</title>
        <authorList>
            <person name="Glaser P."/>
            <person name="Kunst F."/>
            <person name="Arnaud M."/>
            <person name="Coudart M.P."/>
            <person name="Gonzales W."/>
            <person name="Hullo M.-F."/>
            <person name="Ionescu M."/>
            <person name="Lubochinsky B."/>
            <person name="Marcelino L."/>
            <person name="Moszer I."/>
            <person name="Presecan E."/>
            <person name="Santana M."/>
            <person name="Schneider E."/>
            <person name="Schweizer J."/>
            <person name="Vertes A."/>
            <person name="Rapoport G."/>
            <person name="Danchin A."/>
        </authorList>
    </citation>
    <scope>NUCLEOTIDE SEQUENCE [GENOMIC DNA]</scope>
    <source>
        <strain>168</strain>
    </source>
</reference>
<reference key="2">
    <citation type="journal article" date="1997" name="Nature">
        <title>The complete genome sequence of the Gram-positive bacterium Bacillus subtilis.</title>
        <authorList>
            <person name="Kunst F."/>
            <person name="Ogasawara N."/>
            <person name="Moszer I."/>
            <person name="Albertini A.M."/>
            <person name="Alloni G."/>
            <person name="Azevedo V."/>
            <person name="Bertero M.G."/>
            <person name="Bessieres P."/>
            <person name="Bolotin A."/>
            <person name="Borchert S."/>
            <person name="Borriss R."/>
            <person name="Boursier L."/>
            <person name="Brans A."/>
            <person name="Braun M."/>
            <person name="Brignell S.C."/>
            <person name="Bron S."/>
            <person name="Brouillet S."/>
            <person name="Bruschi C.V."/>
            <person name="Caldwell B."/>
            <person name="Capuano V."/>
            <person name="Carter N.M."/>
            <person name="Choi S.-K."/>
            <person name="Codani J.-J."/>
            <person name="Connerton I.F."/>
            <person name="Cummings N.J."/>
            <person name="Daniel R.A."/>
            <person name="Denizot F."/>
            <person name="Devine K.M."/>
            <person name="Duesterhoeft A."/>
            <person name="Ehrlich S.D."/>
            <person name="Emmerson P.T."/>
            <person name="Entian K.-D."/>
            <person name="Errington J."/>
            <person name="Fabret C."/>
            <person name="Ferrari E."/>
            <person name="Foulger D."/>
            <person name="Fritz C."/>
            <person name="Fujita M."/>
            <person name="Fujita Y."/>
            <person name="Fuma S."/>
            <person name="Galizzi A."/>
            <person name="Galleron N."/>
            <person name="Ghim S.-Y."/>
            <person name="Glaser P."/>
            <person name="Goffeau A."/>
            <person name="Golightly E.J."/>
            <person name="Grandi G."/>
            <person name="Guiseppi G."/>
            <person name="Guy B.J."/>
            <person name="Haga K."/>
            <person name="Haiech J."/>
            <person name="Harwood C.R."/>
            <person name="Henaut A."/>
            <person name="Hilbert H."/>
            <person name="Holsappel S."/>
            <person name="Hosono S."/>
            <person name="Hullo M.-F."/>
            <person name="Itaya M."/>
            <person name="Jones L.-M."/>
            <person name="Joris B."/>
            <person name="Karamata D."/>
            <person name="Kasahara Y."/>
            <person name="Klaerr-Blanchard M."/>
            <person name="Klein C."/>
            <person name="Kobayashi Y."/>
            <person name="Koetter P."/>
            <person name="Koningstein G."/>
            <person name="Krogh S."/>
            <person name="Kumano M."/>
            <person name="Kurita K."/>
            <person name="Lapidus A."/>
            <person name="Lardinois S."/>
            <person name="Lauber J."/>
            <person name="Lazarevic V."/>
            <person name="Lee S.-M."/>
            <person name="Levine A."/>
            <person name="Liu H."/>
            <person name="Masuda S."/>
            <person name="Mauel C."/>
            <person name="Medigue C."/>
            <person name="Medina N."/>
            <person name="Mellado R.P."/>
            <person name="Mizuno M."/>
            <person name="Moestl D."/>
            <person name="Nakai S."/>
            <person name="Noback M."/>
            <person name="Noone D."/>
            <person name="O'Reilly M."/>
            <person name="Ogawa K."/>
            <person name="Ogiwara A."/>
            <person name="Oudega B."/>
            <person name="Park S.-H."/>
            <person name="Parro V."/>
            <person name="Pohl T.M."/>
            <person name="Portetelle D."/>
            <person name="Porwollik S."/>
            <person name="Prescott A.M."/>
            <person name="Presecan E."/>
            <person name="Pujic P."/>
            <person name="Purnelle B."/>
            <person name="Rapoport G."/>
            <person name="Rey M."/>
            <person name="Reynolds S."/>
            <person name="Rieger M."/>
            <person name="Rivolta C."/>
            <person name="Rocha E."/>
            <person name="Roche B."/>
            <person name="Rose M."/>
            <person name="Sadaie Y."/>
            <person name="Sato T."/>
            <person name="Scanlan E."/>
            <person name="Schleich S."/>
            <person name="Schroeter R."/>
            <person name="Scoffone F."/>
            <person name="Sekiguchi J."/>
            <person name="Sekowska A."/>
            <person name="Seror S.J."/>
            <person name="Serror P."/>
            <person name="Shin B.-S."/>
            <person name="Soldo B."/>
            <person name="Sorokin A."/>
            <person name="Tacconi E."/>
            <person name="Takagi T."/>
            <person name="Takahashi H."/>
            <person name="Takemaru K."/>
            <person name="Takeuchi M."/>
            <person name="Tamakoshi A."/>
            <person name="Tanaka T."/>
            <person name="Terpstra P."/>
            <person name="Tognoni A."/>
            <person name="Tosato V."/>
            <person name="Uchiyama S."/>
            <person name="Vandenbol M."/>
            <person name="Vannier F."/>
            <person name="Vassarotti A."/>
            <person name="Viari A."/>
            <person name="Wambutt R."/>
            <person name="Wedler E."/>
            <person name="Wedler H."/>
            <person name="Weitzenegger T."/>
            <person name="Winters P."/>
            <person name="Wipat A."/>
            <person name="Yamamoto H."/>
            <person name="Yamane K."/>
            <person name="Yasumoto K."/>
            <person name="Yata K."/>
            <person name="Yoshida K."/>
            <person name="Yoshikawa H.-F."/>
            <person name="Zumstein E."/>
            <person name="Yoshikawa H."/>
            <person name="Danchin A."/>
        </authorList>
    </citation>
    <scope>NUCLEOTIDE SEQUENCE [LARGE SCALE GENOMIC DNA]</scope>
    <source>
        <strain>168</strain>
    </source>
</reference>
<reference key="3">
    <citation type="journal article" date="2009" name="Microbiology">
        <title>From a consortium sequence to a unified sequence: the Bacillus subtilis 168 reference genome a decade later.</title>
        <authorList>
            <person name="Barbe V."/>
            <person name="Cruveiller S."/>
            <person name="Kunst F."/>
            <person name="Lenoble P."/>
            <person name="Meurice G."/>
            <person name="Sekowska A."/>
            <person name="Vallenet D."/>
            <person name="Wang T."/>
            <person name="Moszer I."/>
            <person name="Medigue C."/>
            <person name="Danchin A."/>
        </authorList>
    </citation>
    <scope>SEQUENCE REVISION TO 237-239</scope>
</reference>
<proteinExistence type="inferred from homology"/>
<dbReference type="EMBL" id="X73124">
    <property type="protein sequence ID" value="CAA51624.1"/>
    <property type="molecule type" value="Genomic_DNA"/>
</dbReference>
<dbReference type="EMBL" id="AL009126">
    <property type="protein sequence ID" value="CAB15812.2"/>
    <property type="molecule type" value="Genomic_DNA"/>
</dbReference>
<dbReference type="PIR" id="S39723">
    <property type="entry name" value="S39723"/>
</dbReference>
<dbReference type="RefSeq" id="NP_391665.2">
    <property type="nucleotide sequence ID" value="NC_000964.3"/>
</dbReference>
<dbReference type="RefSeq" id="WP_003243421.1">
    <property type="nucleotide sequence ID" value="NZ_OZ025638.1"/>
</dbReference>
<dbReference type="SMR" id="P39626"/>
<dbReference type="FunCoup" id="P39626">
    <property type="interactions" value="26"/>
</dbReference>
<dbReference type="STRING" id="224308.BSU37860"/>
<dbReference type="PaxDb" id="224308-BSU37860"/>
<dbReference type="EnsemblBacteria" id="CAB15812">
    <property type="protein sequence ID" value="CAB15812"/>
    <property type="gene ID" value="BSU_37860"/>
</dbReference>
<dbReference type="GeneID" id="937232"/>
<dbReference type="KEGG" id="bsu:BSU37860"/>
<dbReference type="PATRIC" id="fig|224308.179.peg.4099"/>
<dbReference type="eggNOG" id="COG1861">
    <property type="taxonomic scope" value="Bacteria"/>
</dbReference>
<dbReference type="InParanoid" id="P39626"/>
<dbReference type="OrthoDB" id="9815559at2"/>
<dbReference type="PhylomeDB" id="P39626"/>
<dbReference type="BioCyc" id="BSUB:BSU37860-MONOMER"/>
<dbReference type="UniPathway" id="UPA00953"/>
<dbReference type="Proteomes" id="UP000001570">
    <property type="component" value="Chromosome"/>
</dbReference>
<dbReference type="GO" id="GO:0005829">
    <property type="term" value="C:cytosol"/>
    <property type="evidence" value="ECO:0000318"/>
    <property type="project" value="GO_Central"/>
</dbReference>
<dbReference type="CDD" id="cd02518">
    <property type="entry name" value="GT2_SpsF"/>
    <property type="match status" value="1"/>
</dbReference>
<dbReference type="FunFam" id="3.90.550.10:FF:000188">
    <property type="entry name" value="Polysaccharide biosynthesis protein"/>
    <property type="match status" value="1"/>
</dbReference>
<dbReference type="Gene3D" id="3.90.550.10">
    <property type="entry name" value="Spore Coat Polysaccharide Biosynthesis Protein SpsA, Chain A"/>
    <property type="match status" value="1"/>
</dbReference>
<dbReference type="InterPro" id="IPR003329">
    <property type="entry name" value="Cytidylyl_trans"/>
</dbReference>
<dbReference type="InterPro" id="IPR029044">
    <property type="entry name" value="Nucleotide-diphossugar_trans"/>
</dbReference>
<dbReference type="PANTHER" id="PTHR42866">
    <property type="entry name" value="3-DEOXY-MANNO-OCTULOSONATE CYTIDYLYLTRANSFERASE"/>
    <property type="match status" value="1"/>
</dbReference>
<dbReference type="PANTHER" id="PTHR42866:SF1">
    <property type="entry name" value="SPORE COAT POLYSACCHARIDE BIOSYNTHESIS PROTEIN SPSF"/>
    <property type="match status" value="1"/>
</dbReference>
<dbReference type="Pfam" id="PF02348">
    <property type="entry name" value="CTP_transf_3"/>
    <property type="match status" value="1"/>
</dbReference>
<dbReference type="SUPFAM" id="SSF53448">
    <property type="entry name" value="Nucleotide-diphospho-sugar transferases"/>
    <property type="match status" value="1"/>
</dbReference>
<keyword id="KW-1185">Reference proteome</keyword>
<feature type="chain" id="PRO_0000213211" description="Spore coat polysaccharide biosynthesis protein SpsF">
    <location>
        <begin position="1"/>
        <end position="240"/>
    </location>
</feature>
<feature type="sequence conflict" description="In Ref. 1; CAA51624." evidence="1" ref="1">
    <original>READ</original>
    <variation>TRG</variation>
    <location>
        <begin position="237"/>
        <end position="240"/>
    </location>
</feature>
<name>SPSF_BACSU</name>
<protein>
    <recommendedName>
        <fullName>Spore coat polysaccharide biosynthesis protein SpsF</fullName>
    </recommendedName>
</protein>
<evidence type="ECO:0000305" key="1"/>
<accession>P39626</accession>
<organism>
    <name type="scientific">Bacillus subtilis (strain 168)</name>
    <dbReference type="NCBI Taxonomy" id="224308"/>
    <lineage>
        <taxon>Bacteria</taxon>
        <taxon>Bacillati</taxon>
        <taxon>Bacillota</taxon>
        <taxon>Bacilli</taxon>
        <taxon>Bacillales</taxon>
        <taxon>Bacillaceae</taxon>
        <taxon>Bacillus</taxon>
    </lineage>
</organism>
<sequence length="240" mass="27483">MNDILFIIQARMGSTRLPGKVLRPLGSNRLLDILVHRVRQSAFYQKDRDNLVIATSDKETDDILEAHCIKQGFRVFRGSEERVLDRFVKVIEAVKPSVIIRLTGDNPFVDPELLDVMIQAHFDQGSDYTYILNAPLGICGEVVNANLLIDISRIQALEDQYQEHVTLYIRNHPALYRVQFLEAPERFRAPQYRLTIDTKEDYESIKALYQKAGERPDVSASELITLLNRNPDAATEREAD</sequence>
<comment type="pathway">
    <text>Spore coat biogenesis; spore coat polysaccharide biosynthesis.</text>
</comment>
<comment type="similarity">
    <text evidence="1">Belongs to the CMP-NeuNAc synthase family.</text>
</comment>
<gene>
    <name type="primary">spsF</name>
    <name type="ordered locus">BSU37860</name>
    <name type="ORF">ipa-68d</name>
</gene>